<accession>A5EVN8</accession>
<sequence length="531" mass="59960">MSDILSQDWRDRRTFAIISHPDAGKTTLTEKLLLFGGAIALAGAVKGRKAAHHATSDWMKMEQERGISVTSSVMQFPYHGKVINLLDTPGHEDFSEDTYRTLTAVDSALMVIDCAKGVEERTIKLMEVCRLRTTPIFTFVNKLDRDGREPMEILDEIERVLHIQCAPVTWPIGMGRSLKGIYHLARDTVYFYTTGKGGASINHGETVVGLDNPRLDTLLPDIIDDFREEIHFLREVGNPFDHEAYLRGELTPVYFGSAISNFGVEEMLTDFAQLAPPPRPHRTTEREVAPQEEKLTGFVFKIQANMDLKHRDRIAFMRVNSGTFRAGMKLWQVRLGREVKIPDALTFLAAEREHAQEAFAGDIIGIHNHGTIRIGDTFTEGESLQFTGIPDFAPELFRRVQLKDPLKMKALLKGLAQLCEEGATQFFKPLIGSDLILGAIGVLQFEVVQQRLETEYNVKCQFESVAVATARWIEAPNDKALKQFIDKNQANLAHDHYEQLVYIAPSRVNLQLTQERFPDIVFSQTRDHLAQ</sequence>
<reference key="1">
    <citation type="journal article" date="2007" name="Nat. Biotechnol.">
        <title>Genome sequence and identification of candidate vaccine antigens from the animal pathogen Dichelobacter nodosus.</title>
        <authorList>
            <person name="Myers G.S.A."/>
            <person name="Parker D."/>
            <person name="Al-Hasani K."/>
            <person name="Kennan R.M."/>
            <person name="Seemann T."/>
            <person name="Ren Q."/>
            <person name="Badger J.H."/>
            <person name="Selengut J.D."/>
            <person name="Deboy R.T."/>
            <person name="Tettelin H."/>
            <person name="Boyce J.D."/>
            <person name="McCarl V.P."/>
            <person name="Han X."/>
            <person name="Nelson W.C."/>
            <person name="Madupu R."/>
            <person name="Mohamoud Y."/>
            <person name="Holley T."/>
            <person name="Fedorova N."/>
            <person name="Khouri H."/>
            <person name="Bottomley S.P."/>
            <person name="Whittington R.J."/>
            <person name="Adler B."/>
            <person name="Songer J.G."/>
            <person name="Rood J.I."/>
            <person name="Paulsen I.T."/>
        </authorList>
    </citation>
    <scope>NUCLEOTIDE SEQUENCE [LARGE SCALE GENOMIC DNA]</scope>
    <source>
        <strain>VCS1703A</strain>
    </source>
</reference>
<proteinExistence type="inferred from homology"/>
<feature type="chain" id="PRO_1000023643" description="Peptide chain release factor 3">
    <location>
        <begin position="1"/>
        <end position="531"/>
    </location>
</feature>
<feature type="domain" description="tr-type G">
    <location>
        <begin position="10"/>
        <end position="279"/>
    </location>
</feature>
<feature type="binding site" evidence="1">
    <location>
        <begin position="19"/>
        <end position="26"/>
    </location>
    <ligand>
        <name>GTP</name>
        <dbReference type="ChEBI" id="CHEBI:37565"/>
    </ligand>
</feature>
<feature type="binding site" evidence="1">
    <location>
        <begin position="87"/>
        <end position="91"/>
    </location>
    <ligand>
        <name>GTP</name>
        <dbReference type="ChEBI" id="CHEBI:37565"/>
    </ligand>
</feature>
<feature type="binding site" evidence="1">
    <location>
        <begin position="141"/>
        <end position="144"/>
    </location>
    <ligand>
        <name>GTP</name>
        <dbReference type="ChEBI" id="CHEBI:37565"/>
    </ligand>
</feature>
<protein>
    <recommendedName>
        <fullName evidence="1">Peptide chain release factor 3</fullName>
        <shortName evidence="1">RF-3</shortName>
    </recommendedName>
</protein>
<dbReference type="EMBL" id="CP000513">
    <property type="protein sequence ID" value="ABQ13611.1"/>
    <property type="molecule type" value="Genomic_DNA"/>
</dbReference>
<dbReference type="RefSeq" id="WP_012030836.1">
    <property type="nucleotide sequence ID" value="NC_009446.1"/>
</dbReference>
<dbReference type="SMR" id="A5EVN8"/>
<dbReference type="STRING" id="246195.DNO_0501"/>
<dbReference type="KEGG" id="dno:DNO_0501"/>
<dbReference type="eggNOG" id="COG4108">
    <property type="taxonomic scope" value="Bacteria"/>
</dbReference>
<dbReference type="HOGENOM" id="CLU_002794_2_1_6"/>
<dbReference type="OrthoDB" id="9801472at2"/>
<dbReference type="Proteomes" id="UP000000248">
    <property type="component" value="Chromosome"/>
</dbReference>
<dbReference type="GO" id="GO:0005829">
    <property type="term" value="C:cytosol"/>
    <property type="evidence" value="ECO:0007669"/>
    <property type="project" value="TreeGrafter"/>
</dbReference>
<dbReference type="GO" id="GO:0005525">
    <property type="term" value="F:GTP binding"/>
    <property type="evidence" value="ECO:0007669"/>
    <property type="project" value="UniProtKB-UniRule"/>
</dbReference>
<dbReference type="GO" id="GO:0003924">
    <property type="term" value="F:GTPase activity"/>
    <property type="evidence" value="ECO:0007669"/>
    <property type="project" value="InterPro"/>
</dbReference>
<dbReference type="GO" id="GO:0097216">
    <property type="term" value="F:guanosine tetraphosphate binding"/>
    <property type="evidence" value="ECO:0007669"/>
    <property type="project" value="UniProtKB-ARBA"/>
</dbReference>
<dbReference type="GO" id="GO:0016150">
    <property type="term" value="F:translation release factor activity, codon nonspecific"/>
    <property type="evidence" value="ECO:0007669"/>
    <property type="project" value="TreeGrafter"/>
</dbReference>
<dbReference type="GO" id="GO:0016149">
    <property type="term" value="F:translation release factor activity, codon specific"/>
    <property type="evidence" value="ECO:0007669"/>
    <property type="project" value="UniProtKB-UniRule"/>
</dbReference>
<dbReference type="GO" id="GO:0006449">
    <property type="term" value="P:regulation of translational termination"/>
    <property type="evidence" value="ECO:0007669"/>
    <property type="project" value="UniProtKB-UniRule"/>
</dbReference>
<dbReference type="CDD" id="cd04169">
    <property type="entry name" value="RF3"/>
    <property type="match status" value="1"/>
</dbReference>
<dbReference type="CDD" id="cd16259">
    <property type="entry name" value="RF3_III"/>
    <property type="match status" value="1"/>
</dbReference>
<dbReference type="FunFam" id="3.30.70.3280:FF:000001">
    <property type="entry name" value="Peptide chain release factor 3"/>
    <property type="match status" value="1"/>
</dbReference>
<dbReference type="FunFam" id="3.40.50.300:FF:000542">
    <property type="entry name" value="Peptide chain release factor 3"/>
    <property type="match status" value="1"/>
</dbReference>
<dbReference type="Gene3D" id="3.40.50.300">
    <property type="entry name" value="P-loop containing nucleotide triphosphate hydrolases"/>
    <property type="match status" value="1"/>
</dbReference>
<dbReference type="Gene3D" id="3.30.70.3280">
    <property type="entry name" value="Peptide chain release factor 3, domain III"/>
    <property type="match status" value="1"/>
</dbReference>
<dbReference type="Gene3D" id="2.40.30.10">
    <property type="entry name" value="Translation factors"/>
    <property type="match status" value="1"/>
</dbReference>
<dbReference type="HAMAP" id="MF_00072">
    <property type="entry name" value="Rel_fac_3"/>
    <property type="match status" value="1"/>
</dbReference>
<dbReference type="InterPro" id="IPR053905">
    <property type="entry name" value="EF-G-like_DII"/>
</dbReference>
<dbReference type="InterPro" id="IPR035647">
    <property type="entry name" value="EFG_III/V"/>
</dbReference>
<dbReference type="InterPro" id="IPR031157">
    <property type="entry name" value="G_TR_CS"/>
</dbReference>
<dbReference type="InterPro" id="IPR027417">
    <property type="entry name" value="P-loop_NTPase"/>
</dbReference>
<dbReference type="InterPro" id="IPR004548">
    <property type="entry name" value="PrfC"/>
</dbReference>
<dbReference type="InterPro" id="IPR032090">
    <property type="entry name" value="RF3_C"/>
</dbReference>
<dbReference type="InterPro" id="IPR038467">
    <property type="entry name" value="RF3_dom_3_sf"/>
</dbReference>
<dbReference type="InterPro" id="IPR041732">
    <property type="entry name" value="RF3_GTP-bd"/>
</dbReference>
<dbReference type="InterPro" id="IPR005225">
    <property type="entry name" value="Small_GTP-bd"/>
</dbReference>
<dbReference type="InterPro" id="IPR000795">
    <property type="entry name" value="T_Tr_GTP-bd_dom"/>
</dbReference>
<dbReference type="InterPro" id="IPR009000">
    <property type="entry name" value="Transl_B-barrel_sf"/>
</dbReference>
<dbReference type="NCBIfam" id="TIGR00503">
    <property type="entry name" value="prfC"/>
    <property type="match status" value="1"/>
</dbReference>
<dbReference type="NCBIfam" id="NF001964">
    <property type="entry name" value="PRK00741.1"/>
    <property type="match status" value="1"/>
</dbReference>
<dbReference type="NCBIfam" id="TIGR00231">
    <property type="entry name" value="small_GTP"/>
    <property type="match status" value="1"/>
</dbReference>
<dbReference type="PANTHER" id="PTHR43556">
    <property type="entry name" value="PEPTIDE CHAIN RELEASE FACTOR RF3"/>
    <property type="match status" value="1"/>
</dbReference>
<dbReference type="PANTHER" id="PTHR43556:SF2">
    <property type="entry name" value="PEPTIDE CHAIN RELEASE FACTOR RF3"/>
    <property type="match status" value="1"/>
</dbReference>
<dbReference type="Pfam" id="PF22042">
    <property type="entry name" value="EF-G_D2"/>
    <property type="match status" value="1"/>
</dbReference>
<dbReference type="Pfam" id="PF00009">
    <property type="entry name" value="GTP_EFTU"/>
    <property type="match status" value="1"/>
</dbReference>
<dbReference type="Pfam" id="PF16658">
    <property type="entry name" value="RF3_C"/>
    <property type="match status" value="1"/>
</dbReference>
<dbReference type="PRINTS" id="PR00315">
    <property type="entry name" value="ELONGATNFCT"/>
</dbReference>
<dbReference type="SUPFAM" id="SSF54980">
    <property type="entry name" value="EF-G C-terminal domain-like"/>
    <property type="match status" value="1"/>
</dbReference>
<dbReference type="SUPFAM" id="SSF52540">
    <property type="entry name" value="P-loop containing nucleoside triphosphate hydrolases"/>
    <property type="match status" value="1"/>
</dbReference>
<dbReference type="SUPFAM" id="SSF50447">
    <property type="entry name" value="Translation proteins"/>
    <property type="match status" value="1"/>
</dbReference>
<dbReference type="PROSITE" id="PS00301">
    <property type="entry name" value="G_TR_1"/>
    <property type="match status" value="1"/>
</dbReference>
<dbReference type="PROSITE" id="PS51722">
    <property type="entry name" value="G_TR_2"/>
    <property type="match status" value="1"/>
</dbReference>
<gene>
    <name evidence="1" type="primary">prfC</name>
    <name type="ordered locus">DNO_0501</name>
</gene>
<comment type="function">
    <text evidence="1">Increases the formation of ribosomal termination complexes and stimulates activities of RF-1 and RF-2. It binds guanine nucleotides and has strong preference for UGA stop codons. It may interact directly with the ribosome. The stimulation of RF-1 and RF-2 is significantly reduced by GTP and GDP, but not by GMP.</text>
</comment>
<comment type="subcellular location">
    <subcellularLocation>
        <location evidence="1">Cytoplasm</location>
    </subcellularLocation>
</comment>
<comment type="similarity">
    <text evidence="1">Belongs to the TRAFAC class translation factor GTPase superfamily. Classic translation factor GTPase family. PrfC subfamily.</text>
</comment>
<name>RF3_DICNV</name>
<keyword id="KW-0963">Cytoplasm</keyword>
<keyword id="KW-0342">GTP-binding</keyword>
<keyword id="KW-0547">Nucleotide-binding</keyword>
<keyword id="KW-0648">Protein biosynthesis</keyword>
<keyword id="KW-1185">Reference proteome</keyword>
<evidence type="ECO:0000255" key="1">
    <source>
        <dbReference type="HAMAP-Rule" id="MF_00072"/>
    </source>
</evidence>
<organism>
    <name type="scientific">Dichelobacter nodosus (strain VCS1703A)</name>
    <dbReference type="NCBI Taxonomy" id="246195"/>
    <lineage>
        <taxon>Bacteria</taxon>
        <taxon>Pseudomonadati</taxon>
        <taxon>Pseudomonadota</taxon>
        <taxon>Gammaproteobacteria</taxon>
        <taxon>Cardiobacteriales</taxon>
        <taxon>Cardiobacteriaceae</taxon>
        <taxon>Dichelobacter</taxon>
    </lineage>
</organism>